<name>ERBB3_MOUSE</name>
<gene>
    <name type="primary">Erbb3</name>
</gene>
<evidence type="ECO:0000250" key="1"/>
<evidence type="ECO:0000250" key="2">
    <source>
        <dbReference type="UniProtKB" id="P21860"/>
    </source>
</evidence>
<evidence type="ECO:0000255" key="3"/>
<evidence type="ECO:0000255" key="4">
    <source>
        <dbReference type="PROSITE-ProRule" id="PRU00159"/>
    </source>
</evidence>
<evidence type="ECO:0000255" key="5">
    <source>
        <dbReference type="PROSITE-ProRule" id="PRU10028"/>
    </source>
</evidence>
<evidence type="ECO:0000256" key="6">
    <source>
        <dbReference type="SAM" id="MobiDB-lite"/>
    </source>
</evidence>
<evidence type="ECO:0000269" key="7">
    <source>
    </source>
</evidence>
<evidence type="ECO:0000305" key="8"/>
<comment type="function">
    <text evidence="2">Tyrosine-protein kinase that plays an essential role as cell surface receptor for neuregulins. Binds to neuregulin-1 (NRG1) and is activated by it; ligand-binding increases phosphorylation on tyrosine residues and promotes its association with the p85 subunit of phosphatidylinositol 3-kinase. May also be activated by CSPG5. Involved in the regulation of myeloid cell differentiation.</text>
</comment>
<comment type="catalytic activity">
    <reaction evidence="5">
        <text>L-tyrosyl-[protein] + ATP = O-phospho-L-tyrosyl-[protein] + ADP + H(+)</text>
        <dbReference type="Rhea" id="RHEA:10596"/>
        <dbReference type="Rhea" id="RHEA-COMP:10136"/>
        <dbReference type="Rhea" id="RHEA-COMP:20101"/>
        <dbReference type="ChEBI" id="CHEBI:15378"/>
        <dbReference type="ChEBI" id="CHEBI:30616"/>
        <dbReference type="ChEBI" id="CHEBI:46858"/>
        <dbReference type="ChEBI" id="CHEBI:61978"/>
        <dbReference type="ChEBI" id="CHEBI:456216"/>
        <dbReference type="EC" id="2.7.10.1"/>
    </reaction>
</comment>
<comment type="subunit">
    <text evidence="2 7 8">Monomer and homodimer. Heterodimer with each of the other ERBB receptors (Potential). Interacts with CSPG5, PA2G4, GRB7 and MUC1 (By similarity). Interacts with MYOC (PubMed:23897819). Found in a ternary complex with NRG1 and ITGAV:ITGB3 or ITGA6:ITGB4 (By similarity).</text>
</comment>
<comment type="interaction">
    <interactant intactId="EBI-931878">
        <id>Q61526</id>
    </interactant>
    <interactant intactId="EBI-2945468">
        <id>P70424</id>
        <label>Erbb2</label>
    </interactant>
    <organismsDiffer>false</organismsDiffer>
    <experiments>2</experiments>
</comment>
<comment type="subcellular location">
    <subcellularLocation>
        <location evidence="1">Membrane</location>
        <topology evidence="1">Single-pass type I membrane protein</topology>
    </subcellularLocation>
</comment>
<comment type="tissue specificity">
    <text>In the muscle, expression localizes to the synaptic sites of muscle fibers.</text>
</comment>
<comment type="domain">
    <text>The cytoplasmic part of the receptor may interact with the SH2 or SH3 domains of many signal-transducing proteins.</text>
</comment>
<comment type="PTM">
    <text evidence="2">Autophosphorylated. Ligand-binding increases phosphorylation on tyrosine residues and promotes its association with the p85 subunit of phosphatidylinositol 3-kinase.</text>
</comment>
<comment type="similarity">
    <text evidence="4">Belongs to the protein kinase superfamily. Tyr protein kinase family. EGF receptor subfamily.</text>
</comment>
<dbReference type="EC" id="2.7.10.1"/>
<dbReference type="EMBL" id="AY686636">
    <property type="protein sequence ID" value="AAT95433.1"/>
    <property type="molecule type" value="mRNA"/>
</dbReference>
<dbReference type="EMBL" id="BC029028">
    <property type="protein sequence ID" value="AAH29028.1"/>
    <property type="molecule type" value="mRNA"/>
</dbReference>
<dbReference type="EMBL" id="BC049279">
    <property type="protein sequence ID" value="AAH49279.1"/>
    <property type="molecule type" value="mRNA"/>
</dbReference>
<dbReference type="EMBL" id="BC106091">
    <property type="protein sequence ID" value="AAI06092.1"/>
    <property type="molecule type" value="mRNA"/>
</dbReference>
<dbReference type="EMBL" id="L47240">
    <property type="protein sequence ID" value="AAA93533.1"/>
    <property type="molecule type" value="mRNA"/>
</dbReference>
<dbReference type="CCDS" id="CCDS24283.1"/>
<dbReference type="RefSeq" id="NP_034283.1">
    <property type="nucleotide sequence ID" value="NM_010153.2"/>
</dbReference>
<dbReference type="SMR" id="Q61526"/>
<dbReference type="BioGRID" id="199497">
    <property type="interactions" value="27"/>
</dbReference>
<dbReference type="FunCoup" id="Q61526">
    <property type="interactions" value="1091"/>
</dbReference>
<dbReference type="IntAct" id="Q61526">
    <property type="interactions" value="2"/>
</dbReference>
<dbReference type="STRING" id="10090.ENSMUSP00000080716"/>
<dbReference type="GlyConnect" id="2676">
    <property type="glycosylation" value="3 N-Linked glycans (1 site)"/>
</dbReference>
<dbReference type="GlyCosmos" id="Q61526">
    <property type="glycosylation" value="10 sites, 3 glycans"/>
</dbReference>
<dbReference type="GlyGen" id="Q61526">
    <property type="glycosylation" value="11 sites, 8 N-linked glycans (5 sites)"/>
</dbReference>
<dbReference type="iPTMnet" id="Q61526"/>
<dbReference type="PhosphoSitePlus" id="Q61526"/>
<dbReference type="PaxDb" id="10090-ENSMUSP00000080716"/>
<dbReference type="PeptideAtlas" id="Q61526"/>
<dbReference type="ProteomicsDB" id="275878"/>
<dbReference type="ABCD" id="Q61526">
    <property type="antibodies" value="1 sequenced antibody"/>
</dbReference>
<dbReference type="Antibodypedia" id="3428">
    <property type="antibodies" value="2790 antibodies from 54 providers"/>
</dbReference>
<dbReference type="DNASU" id="13867"/>
<dbReference type="Ensembl" id="ENSMUST00000082059.7">
    <property type="protein sequence ID" value="ENSMUSP00000080716.7"/>
    <property type="gene ID" value="ENSMUSG00000018166.9"/>
</dbReference>
<dbReference type="GeneID" id="13867"/>
<dbReference type="KEGG" id="mmu:13867"/>
<dbReference type="UCSC" id="uc007hnm.1">
    <property type="organism name" value="mouse"/>
</dbReference>
<dbReference type="AGR" id="MGI:95411"/>
<dbReference type="CTD" id="2065"/>
<dbReference type="MGI" id="MGI:95411">
    <property type="gene designation" value="Erbb3"/>
</dbReference>
<dbReference type="VEuPathDB" id="HostDB:ENSMUSG00000018166"/>
<dbReference type="eggNOG" id="KOG1025">
    <property type="taxonomic scope" value="Eukaryota"/>
</dbReference>
<dbReference type="GeneTree" id="ENSGT00940000156107"/>
<dbReference type="HOGENOM" id="CLU_003384_2_0_1"/>
<dbReference type="InParanoid" id="Q61526"/>
<dbReference type="OMA" id="GACETLC"/>
<dbReference type="OrthoDB" id="6219513at2759"/>
<dbReference type="PhylomeDB" id="Q61526"/>
<dbReference type="TreeFam" id="TF106002"/>
<dbReference type="BRENDA" id="2.7.10.1">
    <property type="organism ID" value="3474"/>
</dbReference>
<dbReference type="Reactome" id="R-MMU-1227986">
    <property type="pathway name" value="Signaling by ERBB2"/>
</dbReference>
<dbReference type="Reactome" id="R-MMU-1236394">
    <property type="pathway name" value="Signaling by ERBB4"/>
</dbReference>
<dbReference type="Reactome" id="R-MMU-1250196">
    <property type="pathway name" value="SHC1 events in ERBB2 signaling"/>
</dbReference>
<dbReference type="Reactome" id="R-MMU-1257604">
    <property type="pathway name" value="PIP3 activates AKT signaling"/>
</dbReference>
<dbReference type="Reactome" id="R-MMU-1306955">
    <property type="pathway name" value="GRB7 events in ERBB2 signaling"/>
</dbReference>
<dbReference type="Reactome" id="R-MMU-1358803">
    <property type="pathway name" value="Downregulation of ERBB2:ERBB3 signaling"/>
</dbReference>
<dbReference type="Reactome" id="R-MMU-1963642">
    <property type="pathway name" value="PI3K events in ERBB2 signaling"/>
</dbReference>
<dbReference type="Reactome" id="R-MMU-5673001">
    <property type="pathway name" value="RAF/MAP kinase cascade"/>
</dbReference>
<dbReference type="Reactome" id="R-MMU-6785631">
    <property type="pathway name" value="ERBB2 Regulates Cell Motility"/>
</dbReference>
<dbReference type="Reactome" id="R-MMU-6811558">
    <property type="pathway name" value="PI5P, PP2A and IER3 Regulate PI3K/AKT Signaling"/>
</dbReference>
<dbReference type="Reactome" id="R-MMU-8847993">
    <property type="pathway name" value="ERBB2 Activates PTK6 Signaling"/>
</dbReference>
<dbReference type="Reactome" id="R-MMU-8863795">
    <property type="pathway name" value="Downregulation of ERBB2 signaling"/>
</dbReference>
<dbReference type="BioGRID-ORCS" id="13867">
    <property type="hits" value="2 hits in 80 CRISPR screens"/>
</dbReference>
<dbReference type="ChiTaRS" id="Erbb3">
    <property type="organism name" value="mouse"/>
</dbReference>
<dbReference type="PRO" id="PR:Q61526"/>
<dbReference type="Proteomes" id="UP000000589">
    <property type="component" value="Chromosome 10"/>
</dbReference>
<dbReference type="RNAct" id="Q61526">
    <property type="molecule type" value="protein"/>
</dbReference>
<dbReference type="Bgee" id="ENSMUSG00000018166">
    <property type="expression patterns" value="Expressed in small intestine Peyer's patch and 266 other cell types or tissues"/>
</dbReference>
<dbReference type="GO" id="GO:0016324">
    <property type="term" value="C:apical plasma membrane"/>
    <property type="evidence" value="ECO:0000314"/>
    <property type="project" value="MGI"/>
</dbReference>
<dbReference type="GO" id="GO:0016323">
    <property type="term" value="C:basolateral plasma membrane"/>
    <property type="evidence" value="ECO:0007669"/>
    <property type="project" value="Ensembl"/>
</dbReference>
<dbReference type="GO" id="GO:0038143">
    <property type="term" value="C:ERBB3:ERBB2 complex"/>
    <property type="evidence" value="ECO:0007669"/>
    <property type="project" value="Ensembl"/>
</dbReference>
<dbReference type="GO" id="GO:0005615">
    <property type="term" value="C:extracellular space"/>
    <property type="evidence" value="ECO:0007669"/>
    <property type="project" value="Ensembl"/>
</dbReference>
<dbReference type="GO" id="GO:0016328">
    <property type="term" value="C:lateral plasma membrane"/>
    <property type="evidence" value="ECO:0000314"/>
    <property type="project" value="MGI"/>
</dbReference>
<dbReference type="GO" id="GO:0005886">
    <property type="term" value="C:plasma membrane"/>
    <property type="evidence" value="ECO:0000314"/>
    <property type="project" value="MGI"/>
</dbReference>
<dbReference type="GO" id="GO:0043235">
    <property type="term" value="C:receptor complex"/>
    <property type="evidence" value="ECO:0000266"/>
    <property type="project" value="MGI"/>
</dbReference>
<dbReference type="GO" id="GO:0005524">
    <property type="term" value="F:ATP binding"/>
    <property type="evidence" value="ECO:0007669"/>
    <property type="project" value="UniProtKB-KW"/>
</dbReference>
<dbReference type="GO" id="GO:0043125">
    <property type="term" value="F:ErbB-3 class receptor binding"/>
    <property type="evidence" value="ECO:0007669"/>
    <property type="project" value="Ensembl"/>
</dbReference>
<dbReference type="GO" id="GO:0042802">
    <property type="term" value="F:identical protein binding"/>
    <property type="evidence" value="ECO:0007669"/>
    <property type="project" value="Ensembl"/>
</dbReference>
<dbReference type="GO" id="GO:0038132">
    <property type="term" value="F:neuregulin binding"/>
    <property type="evidence" value="ECO:0000250"/>
    <property type="project" value="UniProtKB"/>
</dbReference>
<dbReference type="GO" id="GO:0038131">
    <property type="term" value="F:neuregulin receptor activity"/>
    <property type="evidence" value="ECO:0000315"/>
    <property type="project" value="MGI"/>
</dbReference>
<dbReference type="GO" id="GO:0046982">
    <property type="term" value="F:protein heterodimerization activity"/>
    <property type="evidence" value="ECO:0007669"/>
    <property type="project" value="Ensembl"/>
</dbReference>
<dbReference type="GO" id="GO:0004672">
    <property type="term" value="F:protein kinase activity"/>
    <property type="evidence" value="ECO:0007669"/>
    <property type="project" value="InterPro"/>
</dbReference>
<dbReference type="GO" id="GO:0030296">
    <property type="term" value="F:protein tyrosine kinase activator activity"/>
    <property type="evidence" value="ECO:0007669"/>
    <property type="project" value="Ensembl"/>
</dbReference>
<dbReference type="GO" id="GO:0038023">
    <property type="term" value="F:signaling receptor activity"/>
    <property type="evidence" value="ECO:0000314"/>
    <property type="project" value="MGI"/>
</dbReference>
<dbReference type="GO" id="GO:0004888">
    <property type="term" value="F:transmembrane signaling receptor activity"/>
    <property type="evidence" value="ECO:0000314"/>
    <property type="project" value="MGI"/>
</dbReference>
<dbReference type="GO" id="GO:0031625">
    <property type="term" value="F:ubiquitin protein ligase binding"/>
    <property type="evidence" value="ECO:0007669"/>
    <property type="project" value="Ensembl"/>
</dbReference>
<dbReference type="GO" id="GO:0007169">
    <property type="term" value="P:cell surface receptor protein tyrosine kinase signaling pathway"/>
    <property type="evidence" value="ECO:0000266"/>
    <property type="project" value="MGI"/>
</dbReference>
<dbReference type="GO" id="GO:0021545">
    <property type="term" value="P:cranial nerve development"/>
    <property type="evidence" value="ECO:0000315"/>
    <property type="project" value="MGI"/>
</dbReference>
<dbReference type="GO" id="GO:0003197">
    <property type="term" value="P:endocardial cushion development"/>
    <property type="evidence" value="ECO:0000315"/>
    <property type="project" value="MGI"/>
</dbReference>
<dbReference type="GO" id="GO:0038133">
    <property type="term" value="P:ERBB2-ERBB3 signaling pathway"/>
    <property type="evidence" value="ECO:0000314"/>
    <property type="project" value="MGI"/>
</dbReference>
<dbReference type="GO" id="GO:0097192">
    <property type="term" value="P:extrinsic apoptotic signaling pathway in absence of ligand"/>
    <property type="evidence" value="ECO:0007669"/>
    <property type="project" value="Ensembl"/>
</dbReference>
<dbReference type="GO" id="GO:0097049">
    <property type="term" value="P:motor neuron apoptotic process"/>
    <property type="evidence" value="ECO:0000315"/>
    <property type="project" value="MGI"/>
</dbReference>
<dbReference type="GO" id="GO:0042552">
    <property type="term" value="P:myelination"/>
    <property type="evidence" value="ECO:0000315"/>
    <property type="project" value="MGI"/>
</dbReference>
<dbReference type="GO" id="GO:0007162">
    <property type="term" value="P:negative regulation of cell adhesion"/>
    <property type="evidence" value="ECO:0007669"/>
    <property type="project" value="Ensembl"/>
</dbReference>
<dbReference type="GO" id="GO:2000672">
    <property type="term" value="P:negative regulation of motor neuron apoptotic process"/>
    <property type="evidence" value="ECO:0000315"/>
    <property type="project" value="MGI"/>
</dbReference>
<dbReference type="GO" id="GO:0043524">
    <property type="term" value="P:negative regulation of neuron apoptotic process"/>
    <property type="evidence" value="ECO:0000315"/>
    <property type="project" value="MGI"/>
</dbReference>
<dbReference type="GO" id="GO:0051048">
    <property type="term" value="P:negative regulation of secretion"/>
    <property type="evidence" value="ECO:0007669"/>
    <property type="project" value="Ensembl"/>
</dbReference>
<dbReference type="GO" id="GO:0009968">
    <property type="term" value="P:negative regulation of signal transduction"/>
    <property type="evidence" value="ECO:0007669"/>
    <property type="project" value="Ensembl"/>
</dbReference>
<dbReference type="GO" id="GO:0051402">
    <property type="term" value="P:neuron apoptotic process"/>
    <property type="evidence" value="ECO:0000315"/>
    <property type="project" value="MGI"/>
</dbReference>
<dbReference type="GO" id="GO:0007422">
    <property type="term" value="P:peripheral nervous system development"/>
    <property type="evidence" value="ECO:0000315"/>
    <property type="project" value="MGI"/>
</dbReference>
<dbReference type="GO" id="GO:0043491">
    <property type="term" value="P:phosphatidylinositol 3-kinase/protein kinase B signal transduction"/>
    <property type="evidence" value="ECO:0007669"/>
    <property type="project" value="Ensembl"/>
</dbReference>
<dbReference type="GO" id="GO:0070886">
    <property type="term" value="P:positive regulation of calcineurin-NFAT signaling cascade"/>
    <property type="evidence" value="ECO:0000316"/>
    <property type="project" value="MGI"/>
</dbReference>
<dbReference type="GO" id="GO:0055025">
    <property type="term" value="P:positive regulation of cardiac muscle tissue development"/>
    <property type="evidence" value="ECO:0000315"/>
    <property type="project" value="MGI"/>
</dbReference>
<dbReference type="GO" id="GO:0010628">
    <property type="term" value="P:positive regulation of gene expression"/>
    <property type="evidence" value="ECO:0000315"/>
    <property type="project" value="MGI"/>
</dbReference>
<dbReference type="GO" id="GO:0042127">
    <property type="term" value="P:regulation of cell population proliferation"/>
    <property type="evidence" value="ECO:0007669"/>
    <property type="project" value="Ensembl"/>
</dbReference>
<dbReference type="GO" id="GO:0014044">
    <property type="term" value="P:Schwann cell development"/>
    <property type="evidence" value="ECO:0000315"/>
    <property type="project" value="MGI"/>
</dbReference>
<dbReference type="GO" id="GO:0014037">
    <property type="term" value="P:Schwann cell differentiation"/>
    <property type="evidence" value="ECO:0000315"/>
    <property type="project" value="MGI"/>
</dbReference>
<dbReference type="CDD" id="cd00064">
    <property type="entry name" value="FU"/>
    <property type="match status" value="3"/>
</dbReference>
<dbReference type="CDD" id="cd12095">
    <property type="entry name" value="TM_ErbB3"/>
    <property type="match status" value="1"/>
</dbReference>
<dbReference type="FunFam" id="2.10.220.10:FF:000001">
    <property type="entry name" value="Receptor protein-tyrosine kinase"/>
    <property type="match status" value="1"/>
</dbReference>
<dbReference type="FunFam" id="3.80.20.20:FF:000003">
    <property type="entry name" value="Receptor protein-tyrosine kinase"/>
    <property type="match status" value="1"/>
</dbReference>
<dbReference type="FunFam" id="3.80.20.20:FF:000004">
    <property type="entry name" value="Receptor protein-tyrosine kinase"/>
    <property type="match status" value="1"/>
</dbReference>
<dbReference type="FunFam" id="2.10.220.10:FF:000016">
    <property type="entry name" value="Receptor tyrosine-protein kinase erbB-3"/>
    <property type="match status" value="1"/>
</dbReference>
<dbReference type="FunFam" id="3.30.200.20:FF:000276">
    <property type="entry name" value="Receptor tyrosine-protein kinase erbB-3"/>
    <property type="match status" value="1"/>
</dbReference>
<dbReference type="FunFam" id="1.10.510.10:FF:000233">
    <property type="entry name" value="receptor tyrosine-protein kinase erbB-3"/>
    <property type="match status" value="1"/>
</dbReference>
<dbReference type="Gene3D" id="1.20.890.10">
    <property type="entry name" value="cAMP-dependent protein kinase regulatory subunit, dimerization-anchoring domain"/>
    <property type="match status" value="1"/>
</dbReference>
<dbReference type="Gene3D" id="2.10.220.10">
    <property type="entry name" value="Hormone Receptor, Insulin-like Growth Factor Receptor 1, Chain A, domain 2"/>
    <property type="match status" value="2"/>
</dbReference>
<dbReference type="Gene3D" id="3.30.200.20">
    <property type="entry name" value="Phosphorylase Kinase, domain 1"/>
    <property type="match status" value="1"/>
</dbReference>
<dbReference type="Gene3D" id="3.80.20.20">
    <property type="entry name" value="Receptor L-domain"/>
    <property type="match status" value="2"/>
</dbReference>
<dbReference type="Gene3D" id="1.10.510.10">
    <property type="entry name" value="Transferase(Phosphotransferase) domain 1"/>
    <property type="match status" value="1"/>
</dbReference>
<dbReference type="InterPro" id="IPR006211">
    <property type="entry name" value="Furin-like_Cys-rich_dom"/>
</dbReference>
<dbReference type="InterPro" id="IPR006212">
    <property type="entry name" value="Furin_repeat"/>
</dbReference>
<dbReference type="InterPro" id="IPR032778">
    <property type="entry name" value="GF_recep_IV"/>
</dbReference>
<dbReference type="InterPro" id="IPR009030">
    <property type="entry name" value="Growth_fac_rcpt_cys_sf"/>
</dbReference>
<dbReference type="InterPro" id="IPR011009">
    <property type="entry name" value="Kinase-like_dom_sf"/>
</dbReference>
<dbReference type="InterPro" id="IPR000719">
    <property type="entry name" value="Prot_kinase_dom"/>
</dbReference>
<dbReference type="InterPro" id="IPR000494">
    <property type="entry name" value="Rcpt_L-dom"/>
</dbReference>
<dbReference type="InterPro" id="IPR036941">
    <property type="entry name" value="Rcpt_L-dom_sf"/>
</dbReference>
<dbReference type="InterPro" id="IPR050122">
    <property type="entry name" value="RTK"/>
</dbReference>
<dbReference type="InterPro" id="IPR001245">
    <property type="entry name" value="Ser-Thr/Tyr_kinase_cat_dom"/>
</dbReference>
<dbReference type="InterPro" id="IPR008266">
    <property type="entry name" value="Tyr_kinase_AS"/>
</dbReference>
<dbReference type="InterPro" id="IPR020635">
    <property type="entry name" value="Tyr_kinase_cat_dom"/>
</dbReference>
<dbReference type="InterPro" id="IPR016245">
    <property type="entry name" value="Tyr_kinase_EGF/ERB/XmrK_rcpt"/>
</dbReference>
<dbReference type="PANTHER" id="PTHR24416:SF88">
    <property type="entry name" value="RECEPTOR TYROSINE-PROTEIN KINASE ERBB-3"/>
    <property type="match status" value="1"/>
</dbReference>
<dbReference type="PANTHER" id="PTHR24416">
    <property type="entry name" value="TYROSINE-PROTEIN KINASE RECEPTOR"/>
    <property type="match status" value="1"/>
</dbReference>
<dbReference type="Pfam" id="PF00757">
    <property type="entry name" value="Furin-like"/>
    <property type="match status" value="1"/>
</dbReference>
<dbReference type="Pfam" id="PF14843">
    <property type="entry name" value="GF_recep_IV"/>
    <property type="match status" value="1"/>
</dbReference>
<dbReference type="Pfam" id="PF07714">
    <property type="entry name" value="PK_Tyr_Ser-Thr"/>
    <property type="match status" value="1"/>
</dbReference>
<dbReference type="Pfam" id="PF01030">
    <property type="entry name" value="Recep_L_domain"/>
    <property type="match status" value="2"/>
</dbReference>
<dbReference type="PIRSF" id="PIRSF000619">
    <property type="entry name" value="TyrPK_EGF-R"/>
    <property type="match status" value="1"/>
</dbReference>
<dbReference type="PRINTS" id="PR00109">
    <property type="entry name" value="TYRKINASE"/>
</dbReference>
<dbReference type="SMART" id="SM00261">
    <property type="entry name" value="FU"/>
    <property type="match status" value="5"/>
</dbReference>
<dbReference type="SMART" id="SM00219">
    <property type="entry name" value="TyrKc"/>
    <property type="match status" value="1"/>
</dbReference>
<dbReference type="SUPFAM" id="SSF57184">
    <property type="entry name" value="Growth factor receptor domain"/>
    <property type="match status" value="2"/>
</dbReference>
<dbReference type="SUPFAM" id="SSF52058">
    <property type="entry name" value="L domain-like"/>
    <property type="match status" value="2"/>
</dbReference>
<dbReference type="SUPFAM" id="SSF56112">
    <property type="entry name" value="Protein kinase-like (PK-like)"/>
    <property type="match status" value="1"/>
</dbReference>
<dbReference type="PROSITE" id="PS50011">
    <property type="entry name" value="PROTEIN_KINASE_DOM"/>
    <property type="match status" value="1"/>
</dbReference>
<dbReference type="PROSITE" id="PS00109">
    <property type="entry name" value="PROTEIN_KINASE_TYR"/>
    <property type="match status" value="1"/>
</dbReference>
<feature type="signal peptide" evidence="3">
    <location>
        <begin position="1"/>
        <end position="19"/>
    </location>
</feature>
<feature type="chain" id="PRO_0000042231" description="Receptor tyrosine-protein kinase erbB-3">
    <location>
        <begin position="20"/>
        <end position="1339"/>
    </location>
</feature>
<feature type="topological domain" description="Extracellular" evidence="3">
    <location>
        <begin position="20"/>
        <end position="641"/>
    </location>
</feature>
<feature type="transmembrane region" description="Helical" evidence="3">
    <location>
        <begin position="642"/>
        <end position="662"/>
    </location>
</feature>
<feature type="topological domain" description="Cytoplasmic" evidence="3">
    <location>
        <begin position="663"/>
        <end position="1339"/>
    </location>
</feature>
<feature type="domain" description="Protein kinase" evidence="4">
    <location>
        <begin position="707"/>
        <end position="964"/>
    </location>
</feature>
<feature type="region of interest" description="Disordered" evidence="6">
    <location>
        <begin position="1028"/>
        <end position="1052"/>
    </location>
</feature>
<feature type="region of interest" description="Disordered" evidence="6">
    <location>
        <begin position="1077"/>
        <end position="1156"/>
    </location>
</feature>
<feature type="region of interest" description="Disordered" evidence="6">
    <location>
        <begin position="1181"/>
        <end position="1212"/>
    </location>
</feature>
<feature type="compositionally biased region" description="Acidic residues" evidence="6">
    <location>
        <begin position="1185"/>
        <end position="1195"/>
    </location>
</feature>
<feature type="active site" description="Proton acceptor" evidence="4 5">
    <location>
        <position position="832"/>
    </location>
</feature>
<feature type="binding site" evidence="4">
    <location>
        <begin position="713"/>
        <end position="721"/>
    </location>
    <ligand>
        <name>ATP</name>
        <dbReference type="ChEBI" id="CHEBI:30616"/>
    </ligand>
</feature>
<feature type="binding site" evidence="4">
    <location>
        <position position="740"/>
    </location>
    <ligand>
        <name>ATP</name>
        <dbReference type="ChEBI" id="CHEBI:30616"/>
    </ligand>
</feature>
<feature type="binding site" evidence="4">
    <location>
        <begin position="786"/>
        <end position="788"/>
    </location>
    <ligand>
        <name>ATP</name>
        <dbReference type="ChEBI" id="CHEBI:30616"/>
    </ligand>
</feature>
<feature type="binding site" evidence="4">
    <location>
        <begin position="832"/>
        <end position="837"/>
    </location>
    <ligand>
        <name>ATP</name>
        <dbReference type="ChEBI" id="CHEBI:30616"/>
    </ligand>
</feature>
<feature type="modified residue" description="Phosphoserine" evidence="2">
    <location>
        <position position="684"/>
    </location>
</feature>
<feature type="modified residue" description="Phosphoserine" evidence="2">
    <location>
        <position position="980"/>
    </location>
</feature>
<feature type="glycosylation site" description="N-linked (GlcNAc...) asparagine" evidence="3">
    <location>
        <position position="126"/>
    </location>
</feature>
<feature type="glycosylation site" description="N-linked (GlcNAc...) asparagine" evidence="3">
    <location>
        <position position="250"/>
    </location>
</feature>
<feature type="glycosylation site" description="N-linked (GlcNAc...) asparagine" evidence="3">
    <location>
        <position position="353"/>
    </location>
</feature>
<feature type="glycosylation site" description="N-linked (GlcNAc...) asparagine" evidence="3">
    <location>
        <position position="408"/>
    </location>
</feature>
<feature type="glycosylation site" description="N-linked (GlcNAc...) asparagine" evidence="3">
    <location>
        <position position="414"/>
    </location>
</feature>
<feature type="glycosylation site" description="N-linked (GlcNAc...) asparagine" evidence="3">
    <location>
        <position position="437"/>
    </location>
</feature>
<feature type="glycosylation site" description="N-linked (GlcNAc...) asparagine" evidence="3">
    <location>
        <position position="469"/>
    </location>
</feature>
<feature type="glycosylation site" description="N-linked (GlcNAc...) asparagine" evidence="3">
    <location>
        <position position="522"/>
    </location>
</feature>
<feature type="glycosylation site" description="N-linked (GlcNAc...) asparagine" evidence="3">
    <location>
        <position position="566"/>
    </location>
</feature>
<feature type="glycosylation site" description="N-linked (GlcNAc...) asparagine" evidence="3">
    <location>
        <position position="616"/>
    </location>
</feature>
<feature type="disulfide bond" evidence="2">
    <location>
        <begin position="186"/>
        <end position="194"/>
    </location>
</feature>
<feature type="disulfide bond" evidence="2">
    <location>
        <begin position="190"/>
        <end position="202"/>
    </location>
</feature>
<feature type="disulfide bond" evidence="2">
    <location>
        <begin position="210"/>
        <end position="218"/>
    </location>
</feature>
<feature type="disulfide bond" evidence="2">
    <location>
        <begin position="214"/>
        <end position="226"/>
    </location>
</feature>
<feature type="disulfide bond" evidence="2">
    <location>
        <begin position="227"/>
        <end position="235"/>
    </location>
</feature>
<feature type="disulfide bond" evidence="2">
    <location>
        <begin position="231"/>
        <end position="243"/>
    </location>
</feature>
<feature type="disulfide bond" evidence="2">
    <location>
        <begin position="246"/>
        <end position="255"/>
    </location>
</feature>
<feature type="disulfide bond" evidence="2">
    <location>
        <begin position="259"/>
        <end position="286"/>
    </location>
</feature>
<feature type="disulfide bond" evidence="2">
    <location>
        <begin position="290"/>
        <end position="301"/>
    </location>
</feature>
<feature type="disulfide bond" evidence="2">
    <location>
        <begin position="305"/>
        <end position="320"/>
    </location>
</feature>
<feature type="disulfide bond" evidence="2">
    <location>
        <begin position="323"/>
        <end position="327"/>
    </location>
</feature>
<feature type="disulfide bond" evidence="2">
    <location>
        <begin position="500"/>
        <end position="509"/>
    </location>
</feature>
<feature type="disulfide bond" evidence="2">
    <location>
        <begin position="504"/>
        <end position="517"/>
    </location>
</feature>
<feature type="disulfide bond" evidence="2">
    <location>
        <begin position="520"/>
        <end position="529"/>
    </location>
</feature>
<feature type="disulfide bond" evidence="2">
    <location>
        <begin position="533"/>
        <end position="549"/>
    </location>
</feature>
<feature type="disulfide bond" evidence="2">
    <location>
        <begin position="552"/>
        <end position="565"/>
    </location>
</feature>
<feature type="disulfide bond" evidence="2">
    <location>
        <begin position="556"/>
        <end position="573"/>
    </location>
</feature>
<feature type="disulfide bond" evidence="2">
    <location>
        <begin position="576"/>
        <end position="585"/>
    </location>
</feature>
<feature type="disulfide bond" evidence="2">
    <location>
        <begin position="589"/>
        <end position="610"/>
    </location>
</feature>
<feature type="disulfide bond" evidence="2">
    <location>
        <begin position="613"/>
        <end position="621"/>
    </location>
</feature>
<feature type="disulfide bond" evidence="2">
    <location>
        <begin position="617"/>
        <end position="629"/>
    </location>
</feature>
<feature type="sequence conflict" description="In Ref. 3; AAA93533." evidence="8" ref="3">
    <original>A</original>
    <variation>V</variation>
    <location>
        <position position="1067"/>
    </location>
</feature>
<organism>
    <name type="scientific">Mus musculus</name>
    <name type="common">Mouse</name>
    <dbReference type="NCBI Taxonomy" id="10090"/>
    <lineage>
        <taxon>Eukaryota</taxon>
        <taxon>Metazoa</taxon>
        <taxon>Chordata</taxon>
        <taxon>Craniata</taxon>
        <taxon>Vertebrata</taxon>
        <taxon>Euteleostomi</taxon>
        <taxon>Mammalia</taxon>
        <taxon>Eutheria</taxon>
        <taxon>Euarchontoglires</taxon>
        <taxon>Glires</taxon>
        <taxon>Rodentia</taxon>
        <taxon>Myomorpha</taxon>
        <taxon>Muroidea</taxon>
        <taxon>Muridae</taxon>
        <taxon>Murinae</taxon>
        <taxon>Mus</taxon>
        <taxon>Mus</taxon>
    </lineage>
</organism>
<proteinExistence type="evidence at protein level"/>
<keyword id="KW-0067">ATP-binding</keyword>
<keyword id="KW-1015">Disulfide bond</keyword>
<keyword id="KW-0325">Glycoprotein</keyword>
<keyword id="KW-0418">Kinase</keyword>
<keyword id="KW-0472">Membrane</keyword>
<keyword id="KW-0547">Nucleotide-binding</keyword>
<keyword id="KW-0597">Phosphoprotein</keyword>
<keyword id="KW-0675">Receptor</keyword>
<keyword id="KW-1185">Reference proteome</keyword>
<keyword id="KW-0732">Signal</keyword>
<keyword id="KW-0808">Transferase</keyword>
<keyword id="KW-0812">Transmembrane</keyword>
<keyword id="KW-1133">Transmembrane helix</keyword>
<keyword id="KW-0829">Tyrosine-protein kinase</keyword>
<protein>
    <recommendedName>
        <fullName>Receptor tyrosine-protein kinase erbB-3</fullName>
        <ecNumber>2.7.10.1</ecNumber>
    </recommendedName>
    <alternativeName>
        <fullName>Glial growth factor receptor</fullName>
    </alternativeName>
    <alternativeName>
        <fullName>Proto-oncogene-like protein c-ErbB-3</fullName>
    </alternativeName>
</protein>
<reference key="1">
    <citation type="submission" date="2004-07" db="EMBL/GenBank/DDBJ databases">
        <title>Involvement of the ErbB3 signaling pathway in Schwann cell migration.</title>
        <authorList>
            <person name="Yamauchi J."/>
            <person name="Shooter E.M."/>
        </authorList>
    </citation>
    <scope>NUCLEOTIDE SEQUENCE [MRNA]</scope>
    <source>
        <strain>BALB/cJ</strain>
    </source>
</reference>
<reference key="2">
    <citation type="journal article" date="2004" name="Genome Res.">
        <title>The status, quality, and expansion of the NIH full-length cDNA project: the Mammalian Gene Collection (MGC).</title>
        <authorList>
            <consortium name="The MGC Project Team"/>
        </authorList>
    </citation>
    <scope>NUCLEOTIDE SEQUENCE [LARGE SCALE MRNA]</scope>
    <source>
        <strain>FVB/N</strain>
        <tissue>Mammary tumor</tissue>
        <tissue>Thyroid</tissue>
    </source>
</reference>
<reference key="3">
    <citation type="journal article" date="1995" name="Dev. Biol.">
        <title>Synapse-associated expression of an acetylcholine receptor-inducing protein, ARIA/heregulin, and its putative receptors, ErbB2 and ErbB3, in developing mammalian muscle.</title>
        <authorList>
            <person name="Moscoso L.M."/>
            <person name="Chu G.C."/>
            <person name="Gautam M."/>
            <person name="Noakes P.G."/>
            <person name="Merlie J.P."/>
            <person name="Sanes J.R."/>
        </authorList>
    </citation>
    <scope>NUCLEOTIDE SEQUENCE [MRNA] OF 1061-1154</scope>
    <source>
        <tissue>Muscle fibroblast</tissue>
    </source>
</reference>
<reference key="4">
    <citation type="journal article" date="2013" name="J. Biol. Chem.">
        <title>Myocilin mediates myelination in the peripheral nervous system through ErbB2/3 signaling.</title>
        <authorList>
            <person name="Kwon H.S."/>
            <person name="Johnson T.V."/>
            <person name="Joe M.K."/>
            <person name="Abu-Asab M."/>
            <person name="Zhang J."/>
            <person name="Chan C.C."/>
            <person name="Tomarev S.I."/>
        </authorList>
    </citation>
    <scope>INTERACTION WITH MYOC</scope>
</reference>
<accession>Q61526</accession>
<accession>Q3KQR1</accession>
<accession>Q68J64</accession>
<accession>Q810U8</accession>
<accession>Q8K317</accession>
<sequence>MSAIGTLQVLGFLLSLARGSEMGNSQAVCPGTLNGLSVTGDADNQYQTLYKLYEKCEVVMGNLEIVLTGHNADLSFLQWIREVTGYVLVAMNEFSVLPLPNLRVVRGTQVYDGKFAIFVMLNYNTNSSHALRQLRFTQLTEILLGGVYIEKNDKLCHMDTIDWRDIVRVPDAEIVVKNNGGNCPPCHEVCKGRCWGPGPEDCQILTKTICAPQCNGRCFGPNPNQCCHDECAGGCSGPQDTDCFACRHFNDSGACVPRCPAPLVYNKLTFQLEPNPHIKYQYGGVCVASCPHNFVVDQTFCVRACPADKMEVDKNGLKMCEPCRGLCPKACEGTGSGSRYQTVDSSNIDGFVNCTKILGNLDFLITGLNGDPWHKIPALDPEKLNVFRTVREITGYLNIQSWPPHMHNFSVFSNLTTIGGRSLYNRGFSLLIMKNLNVTSLGFRSLKEISAGRVYISANQQLCYHHSLNWTRLLRGPAEERLDIKYNRPLGECVAEGKVCDPLCSSGGCWGPGPGQCLSCRNYSREGVCVTHCNVLQGEPREFVHEAHCFSCHPECQPMEGTSTCNGSGSDACARCAHFRDGPHCVNSCPHGILGAKGPIYKYPDAQNECRPCHENCTQGCKGPELQDCLGQAEVLMSKPHLVIAVTVGLTVIFLILGGSFLYWRGRRIQNKRAMRRYLERGESIEPLDPSEKANKVLARIFKETELRKLKVLGSGVFGTVHKGIWIPEGESIKIPVCIKVIEDKSGRQSFQAVTDHMLAVGSLDHAHIVRLLGLCPGSSLQLVTQYLPLGSLLDHVRQHRETLGPQLLLNWGVQIAKGMYYLEEHSMVHRDLALRNVMLKSPSQVQVADFGVADLLPPDDKQLLHSEAKTPIKWMALESIHFGKYTHQSDVWSYGVTVWELMTFGAEPYAGLRLAEIPDLLEKGERLAQPQICTIDVYMVMVKCWMIDENIRPTFKELANEFTRMARDPPRYLVIKRASGPGIPPAAEPSALSTKELQDAELEPDLDLDLDVEVEEEGLATTLGSALSLPTGTLTRPRGSQSLLSPSSGYMPMNQSNLGEACLDSAVLGGREQFSRPISLHPIPRGRQTSESSEGHVTGSEAELQERVSMCRSRSRSRSPRPRGDSAYHSQRHSLLTPVTPLSPPGLEEEDGNGYVMPDTHLRGTSSSREGTLSSVGLSSVLGTEEEDEDEEYEYMNRKRRGSPARPPRPGSLEELGYEYMDVGSDLSASLGSTQSCPLHPMAIVPSAGTTPDEDYEYMNRRRGAGGSGGDYAAMGACPAAEQGYEEMRAFQGPGHQAPHVRYARLKTLRSLEATDSAFDNPDYWHSRLFPKANAQRI</sequence>